<feature type="chain" id="PRO_0000211567" description="Trafficking protein particle complex subunit 2">
    <location>
        <begin position="1"/>
        <end position="140"/>
    </location>
</feature>
<feature type="mutagenesis site" description="Increased interaction with TRAPPC3." evidence="3">
    <original>D</original>
    <variation>Y</variation>
    <location>
        <position position="47"/>
    </location>
</feature>
<feature type="mutagenesis site" description="Aberrant protein folding and increased proteasomal degradation." evidence="3">
    <original>S</original>
    <variation>L</variation>
    <location>
        <position position="73"/>
    </location>
</feature>
<feature type="mutagenesis site" description="Aberrant protein folding and increased proteasomal degradation." evidence="3">
    <original>F</original>
    <variation>S</variation>
    <location>
        <position position="83"/>
    </location>
</feature>
<feature type="mutagenesis site" description="Aberrant protein folding and increased proteasomal degradation." evidence="3">
    <original>V</original>
    <variation>D</variation>
    <location>
        <position position="130"/>
    </location>
</feature>
<feature type="sequence conflict" description="In Ref. 1; BAB22265." evidence="4" ref="1">
    <original>F</original>
    <variation>I</variation>
    <location>
        <position position="7"/>
    </location>
</feature>
<feature type="sequence conflict" description="In Ref. 1; BAB25114/BAB22047/BAB23275." evidence="4" ref="1">
    <original>P</original>
    <variation>A</variation>
    <location>
        <position position="25"/>
    </location>
</feature>
<feature type="sequence conflict" description="In Ref. 1; BAB25114/BAB22047/BAB23275." evidence="4" ref="1">
    <original>D</original>
    <variation>E</variation>
    <location>
        <position position="33"/>
    </location>
</feature>
<feature type="sequence conflict" description="In Ref. 1; BAB25114/BAB22047/BAB23275." evidence="4" ref="1">
    <original>F</original>
    <variation>L</variation>
    <location>
        <position position="83"/>
    </location>
</feature>
<feature type="sequence conflict" description="In Ref. 1; BAB25114/BAB22047/BAB23275." evidence="4" ref="1">
    <original>Q</original>
    <variation>H</variation>
    <location>
        <position position="91"/>
    </location>
</feature>
<feature type="sequence conflict" description="In Ref. 1; BAB23284." evidence="4" ref="1">
    <original>F</original>
    <variation>L</variation>
    <location>
        <position position="98"/>
    </location>
</feature>
<feature type="sequence conflict" description="In Ref. 1; BAC36921." evidence="4" ref="1">
    <original>R</original>
    <variation>Q</variation>
    <location>
        <position position="122"/>
    </location>
</feature>
<feature type="sequence conflict" description="In Ref. 1; BAB25114/BAB22047/BAB23275." evidence="4" ref="1">
    <original>D</original>
    <variation>E</variation>
    <location>
        <position position="127"/>
    </location>
</feature>
<feature type="sequence conflict" description="In Ref. 1; BAB25114/BAB22047/BAB23275." evidence="4" ref="1">
    <original>S</original>
    <variation>N</variation>
    <location>
        <position position="140"/>
    </location>
</feature>
<feature type="strand" evidence="5">
    <location>
        <begin position="5"/>
        <end position="10"/>
    </location>
</feature>
<feature type="strand" evidence="5">
    <location>
        <begin position="16"/>
        <end position="22"/>
    </location>
</feature>
<feature type="helix" evidence="5">
    <location>
        <begin position="28"/>
        <end position="30"/>
    </location>
</feature>
<feature type="helix" evidence="5">
    <location>
        <begin position="31"/>
        <end position="52"/>
    </location>
</feature>
<feature type="helix" evidence="5">
    <location>
        <begin position="53"/>
        <end position="55"/>
    </location>
</feature>
<feature type="strand" evidence="5">
    <location>
        <begin position="59"/>
        <end position="67"/>
    </location>
</feature>
<feature type="strand" evidence="5">
    <location>
        <begin position="70"/>
        <end position="76"/>
    </location>
</feature>
<feature type="strand" evidence="5">
    <location>
        <begin position="82"/>
        <end position="89"/>
    </location>
</feature>
<feature type="helix" evidence="5">
    <location>
        <begin position="92"/>
        <end position="111"/>
    </location>
</feature>
<feature type="helix" evidence="5">
    <location>
        <begin position="124"/>
        <end position="137"/>
    </location>
</feature>
<name>TPPC2_MOUSE</name>
<protein>
    <recommendedName>
        <fullName>Trafficking protein particle complex subunit 2</fullName>
    </recommendedName>
    <alternativeName>
        <fullName>Sedlin</fullName>
    </alternativeName>
</protein>
<reference key="1">
    <citation type="journal article" date="2005" name="Science">
        <title>The transcriptional landscape of the mammalian genome.</title>
        <authorList>
            <person name="Carninci P."/>
            <person name="Kasukawa T."/>
            <person name="Katayama S."/>
            <person name="Gough J."/>
            <person name="Frith M.C."/>
            <person name="Maeda N."/>
            <person name="Oyama R."/>
            <person name="Ravasi T."/>
            <person name="Lenhard B."/>
            <person name="Wells C."/>
            <person name="Kodzius R."/>
            <person name="Shimokawa K."/>
            <person name="Bajic V.B."/>
            <person name="Brenner S.E."/>
            <person name="Batalov S."/>
            <person name="Forrest A.R."/>
            <person name="Zavolan M."/>
            <person name="Davis M.J."/>
            <person name="Wilming L.G."/>
            <person name="Aidinis V."/>
            <person name="Allen J.E."/>
            <person name="Ambesi-Impiombato A."/>
            <person name="Apweiler R."/>
            <person name="Aturaliya R.N."/>
            <person name="Bailey T.L."/>
            <person name="Bansal M."/>
            <person name="Baxter L."/>
            <person name="Beisel K.W."/>
            <person name="Bersano T."/>
            <person name="Bono H."/>
            <person name="Chalk A.M."/>
            <person name="Chiu K.P."/>
            <person name="Choudhary V."/>
            <person name="Christoffels A."/>
            <person name="Clutterbuck D.R."/>
            <person name="Crowe M.L."/>
            <person name="Dalla E."/>
            <person name="Dalrymple B.P."/>
            <person name="de Bono B."/>
            <person name="Della Gatta G."/>
            <person name="di Bernardo D."/>
            <person name="Down T."/>
            <person name="Engstrom P."/>
            <person name="Fagiolini M."/>
            <person name="Faulkner G."/>
            <person name="Fletcher C.F."/>
            <person name="Fukushima T."/>
            <person name="Furuno M."/>
            <person name="Futaki S."/>
            <person name="Gariboldi M."/>
            <person name="Georgii-Hemming P."/>
            <person name="Gingeras T.R."/>
            <person name="Gojobori T."/>
            <person name="Green R.E."/>
            <person name="Gustincich S."/>
            <person name="Harbers M."/>
            <person name="Hayashi Y."/>
            <person name="Hensch T.K."/>
            <person name="Hirokawa N."/>
            <person name="Hill D."/>
            <person name="Huminiecki L."/>
            <person name="Iacono M."/>
            <person name="Ikeo K."/>
            <person name="Iwama A."/>
            <person name="Ishikawa T."/>
            <person name="Jakt M."/>
            <person name="Kanapin A."/>
            <person name="Katoh M."/>
            <person name="Kawasawa Y."/>
            <person name="Kelso J."/>
            <person name="Kitamura H."/>
            <person name="Kitano H."/>
            <person name="Kollias G."/>
            <person name="Krishnan S.P."/>
            <person name="Kruger A."/>
            <person name="Kummerfeld S.K."/>
            <person name="Kurochkin I.V."/>
            <person name="Lareau L.F."/>
            <person name="Lazarevic D."/>
            <person name="Lipovich L."/>
            <person name="Liu J."/>
            <person name="Liuni S."/>
            <person name="McWilliam S."/>
            <person name="Madan Babu M."/>
            <person name="Madera M."/>
            <person name="Marchionni L."/>
            <person name="Matsuda H."/>
            <person name="Matsuzawa S."/>
            <person name="Miki H."/>
            <person name="Mignone F."/>
            <person name="Miyake S."/>
            <person name="Morris K."/>
            <person name="Mottagui-Tabar S."/>
            <person name="Mulder N."/>
            <person name="Nakano N."/>
            <person name="Nakauchi H."/>
            <person name="Ng P."/>
            <person name="Nilsson R."/>
            <person name="Nishiguchi S."/>
            <person name="Nishikawa S."/>
            <person name="Nori F."/>
            <person name="Ohara O."/>
            <person name="Okazaki Y."/>
            <person name="Orlando V."/>
            <person name="Pang K.C."/>
            <person name="Pavan W.J."/>
            <person name="Pavesi G."/>
            <person name="Pesole G."/>
            <person name="Petrovsky N."/>
            <person name="Piazza S."/>
            <person name="Reed J."/>
            <person name="Reid J.F."/>
            <person name="Ring B.Z."/>
            <person name="Ringwald M."/>
            <person name="Rost B."/>
            <person name="Ruan Y."/>
            <person name="Salzberg S.L."/>
            <person name="Sandelin A."/>
            <person name="Schneider C."/>
            <person name="Schoenbach C."/>
            <person name="Sekiguchi K."/>
            <person name="Semple C.A."/>
            <person name="Seno S."/>
            <person name="Sessa L."/>
            <person name="Sheng Y."/>
            <person name="Shibata Y."/>
            <person name="Shimada H."/>
            <person name="Shimada K."/>
            <person name="Silva D."/>
            <person name="Sinclair B."/>
            <person name="Sperling S."/>
            <person name="Stupka E."/>
            <person name="Sugiura K."/>
            <person name="Sultana R."/>
            <person name="Takenaka Y."/>
            <person name="Taki K."/>
            <person name="Tammoja K."/>
            <person name="Tan S.L."/>
            <person name="Tang S."/>
            <person name="Taylor M.S."/>
            <person name="Tegner J."/>
            <person name="Teichmann S.A."/>
            <person name="Ueda H.R."/>
            <person name="van Nimwegen E."/>
            <person name="Verardo R."/>
            <person name="Wei C.L."/>
            <person name="Yagi K."/>
            <person name="Yamanishi H."/>
            <person name="Zabarovsky E."/>
            <person name="Zhu S."/>
            <person name="Zimmer A."/>
            <person name="Hide W."/>
            <person name="Bult C."/>
            <person name="Grimmond S.M."/>
            <person name="Teasdale R.D."/>
            <person name="Liu E.T."/>
            <person name="Brusic V."/>
            <person name="Quackenbush J."/>
            <person name="Wahlestedt C."/>
            <person name="Mattick J.S."/>
            <person name="Hume D.A."/>
            <person name="Kai C."/>
            <person name="Sasaki D."/>
            <person name="Tomaru Y."/>
            <person name="Fukuda S."/>
            <person name="Kanamori-Katayama M."/>
            <person name="Suzuki M."/>
            <person name="Aoki J."/>
            <person name="Arakawa T."/>
            <person name="Iida J."/>
            <person name="Imamura K."/>
            <person name="Itoh M."/>
            <person name="Kato T."/>
            <person name="Kawaji H."/>
            <person name="Kawagashira N."/>
            <person name="Kawashima T."/>
            <person name="Kojima M."/>
            <person name="Kondo S."/>
            <person name="Konno H."/>
            <person name="Nakano K."/>
            <person name="Ninomiya N."/>
            <person name="Nishio T."/>
            <person name="Okada M."/>
            <person name="Plessy C."/>
            <person name="Shibata K."/>
            <person name="Shiraki T."/>
            <person name="Suzuki S."/>
            <person name="Tagami M."/>
            <person name="Waki K."/>
            <person name="Watahiki A."/>
            <person name="Okamura-Oho Y."/>
            <person name="Suzuki H."/>
            <person name="Kawai J."/>
            <person name="Hayashizaki Y."/>
        </authorList>
    </citation>
    <scope>NUCLEOTIDE SEQUENCE [LARGE SCALE MRNA]</scope>
    <source>
        <strain>C57BL/6J</strain>
        <tissue>Embryo</tissue>
        <tissue>Kidney</tissue>
        <tissue>Pancreas</tissue>
        <tissue>Small intestine</tissue>
    </source>
</reference>
<reference key="2">
    <citation type="journal article" date="2004" name="Genome Res.">
        <title>The status, quality, and expansion of the NIH full-length cDNA project: the Mammalian Gene Collection (MGC).</title>
        <authorList>
            <consortium name="The MGC Project Team"/>
        </authorList>
    </citation>
    <scope>NUCLEOTIDE SEQUENCE [LARGE SCALE MRNA]</scope>
    <source>
        <tissue>Brain</tissue>
        <tissue>Mammary gland</tissue>
    </source>
</reference>
<reference key="3">
    <citation type="journal article" date="2009" name="Biochem. J.">
        <title>Biochemical consequences of sedlin mutations that cause spondyloepiphyseal dysplasia tarda.</title>
        <authorList>
            <person name="Choi M.Y."/>
            <person name="Chan C.C.Y."/>
            <person name="Chan D."/>
            <person name="Luk K.D.K."/>
            <person name="Cheah K.S.E."/>
            <person name="Tanner J.A."/>
        </authorList>
    </citation>
    <scope>INTERACTION WITH TRAPPC3</scope>
    <scope>SUBCELLULAR LOCATION</scope>
    <scope>TISSUE SPECIFICITY</scope>
    <scope>MUTAGENESIS OF ASP-47; SER-73; PHE-83 AND VAL-130</scope>
</reference>
<reference key="4">
    <citation type="journal article" date="2002" name="J. Biol. Chem.">
        <title>Crystal structure of SEDL and its implications for a genetic disease spondyloepiphyseal dysplasia tarda.</title>
        <authorList>
            <person name="Jang S.B."/>
            <person name="Kim Y.-G."/>
            <person name="Cho Y.-S."/>
            <person name="Suh P.-G."/>
            <person name="Kim K.-H."/>
            <person name="Oh B.-H."/>
        </authorList>
    </citation>
    <scope>X-RAY CRYSTALLOGRAPHY (2.4 ANGSTROMS)</scope>
</reference>
<comment type="function">
    <text evidence="1">Prevents ENO1-mediated transcriptional repression and antagonizes ENO1-mediated cell death. May play a role in vesicular transport from endoplasmic reticulum to Golgi (By similarity).</text>
</comment>
<comment type="subunit">
    <text evidence="1 3">Part of the multisubunit TRAPP (transport protein particle) complex. Interacts with ENO1, PITX1, SF1 and TRAPPC2L (By similarity). Interacts with TRAPPC3.</text>
</comment>
<comment type="interaction">
    <interactant intactId="EBI-1172267">
        <id>Q9CQP2</id>
    </interactant>
    <interactant intactId="EBI-7067375">
        <id>Q8K3V1</id>
        <label>Spata4</label>
    </interactant>
    <organismsDiffer>false</organismsDiffer>
    <experiments>3</experiments>
</comment>
<comment type="interaction">
    <interactant intactId="EBI-1172267">
        <id>Q9CQP2</id>
    </interactant>
    <interactant intactId="EBI-6160596">
        <id>Q96Q05</id>
        <label>TRAPPC9</label>
    </interactant>
    <organismsDiffer>true</organismsDiffer>
    <experiments>2</experiments>
</comment>
<comment type="subcellular location">
    <subcellularLocation>
        <location evidence="3">Cytoplasm</location>
        <location evidence="3">Perinuclear region</location>
    </subcellularLocation>
    <subcellularLocation>
        <location evidence="2">Nucleus</location>
    </subcellularLocation>
    <subcellularLocation>
        <location evidence="2">Endoplasmic reticulum-Golgi intermediate compartment</location>
    </subcellularLocation>
    <subcellularLocation>
        <location evidence="3">Cytoplasm</location>
    </subcellularLocation>
    <text evidence="3">Localized in perinuclear granular structures.</text>
</comment>
<comment type="tissue specificity">
    <text evidence="3">Expressed in chondrocytes at various stages of differentiation, including proliferating, prehypertrophic and hypertrophic chondrocytes in the distal femoral joint.</text>
</comment>
<comment type="similarity">
    <text evidence="4">Belongs to the TRAPP small subunits family. Sedlin subfamily.</text>
</comment>
<keyword id="KW-0002">3D-structure</keyword>
<keyword id="KW-0963">Cytoplasm</keyword>
<keyword id="KW-0931">ER-Golgi transport</keyword>
<keyword id="KW-0539">Nucleus</keyword>
<keyword id="KW-1185">Reference proteome</keyword>
<keyword id="KW-0804">Transcription</keyword>
<keyword id="KW-0813">Transport</keyword>
<proteinExistence type="evidence at protein level"/>
<accession>Q9CQP2</accession>
<accession>Q8BP61</accession>
<accession>Q9CQF5</accession>
<accession>Q9D0V3</accession>
<accession>Q9DCM3</accession>
<gene>
    <name type="primary">Trappc2</name>
    <name type="synonym">Sedl</name>
</gene>
<dbReference type="EMBL" id="AK008564">
    <property type="protein sequence ID" value="BAB25747.1"/>
    <property type="molecule type" value="mRNA"/>
</dbReference>
<dbReference type="EMBL" id="AK007889">
    <property type="protein sequence ID" value="BAB25332.1"/>
    <property type="molecule type" value="mRNA"/>
</dbReference>
<dbReference type="EMBL" id="AK002658">
    <property type="protein sequence ID" value="BAB22265.1"/>
    <property type="molecule type" value="mRNA"/>
</dbReference>
<dbReference type="EMBL" id="AK004389">
    <property type="protein sequence ID" value="BAB23284.1"/>
    <property type="molecule type" value="mRNA"/>
</dbReference>
<dbReference type="EMBL" id="AK007568">
    <property type="protein sequence ID" value="BAB25114.1"/>
    <property type="molecule type" value="mRNA"/>
</dbReference>
<dbReference type="EMBL" id="AK002369">
    <property type="protein sequence ID" value="BAB22047.1"/>
    <property type="molecule type" value="mRNA"/>
</dbReference>
<dbReference type="EMBL" id="AK004363">
    <property type="protein sequence ID" value="BAB23275.1"/>
    <property type="molecule type" value="mRNA"/>
</dbReference>
<dbReference type="EMBL" id="AK077643">
    <property type="protein sequence ID" value="BAC36921.1"/>
    <property type="molecule type" value="mRNA"/>
</dbReference>
<dbReference type="EMBL" id="BC034845">
    <property type="protein sequence ID" value="AAH34845.1"/>
    <property type="molecule type" value="mRNA"/>
</dbReference>
<dbReference type="EMBL" id="BC061087">
    <property type="protein sequence ID" value="AAH61087.1"/>
    <property type="molecule type" value="mRNA"/>
</dbReference>
<dbReference type="CCDS" id="CCDS41208.1"/>
<dbReference type="RefSeq" id="NP_001300651.1">
    <property type="nucleotide sequence ID" value="NM_001313722.1"/>
</dbReference>
<dbReference type="RefSeq" id="NP_079708.2">
    <property type="nucleotide sequence ID" value="NM_025432.4"/>
</dbReference>
<dbReference type="RefSeq" id="XP_006533980.1">
    <property type="nucleotide sequence ID" value="XM_006533917.3"/>
</dbReference>
<dbReference type="RefSeq" id="XP_006533981.1">
    <property type="nucleotide sequence ID" value="XM_006533918.2"/>
</dbReference>
<dbReference type="RefSeq" id="XP_006533982.1">
    <property type="nucleotide sequence ID" value="XM_006533919.2"/>
</dbReference>
<dbReference type="PDB" id="1H3Q">
    <property type="method" value="X-ray"/>
    <property type="resolution" value="2.40 A"/>
    <property type="chains" value="A=1-140"/>
</dbReference>
<dbReference type="PDB" id="2J3W">
    <property type="method" value="X-ray"/>
    <property type="resolution" value="2.10 A"/>
    <property type="chains" value="A/C=1-140"/>
</dbReference>
<dbReference type="PDBsum" id="1H3Q"/>
<dbReference type="PDBsum" id="2J3W"/>
<dbReference type="SMR" id="Q9CQP2"/>
<dbReference type="BioGRID" id="211310">
    <property type="interactions" value="5"/>
</dbReference>
<dbReference type="ComplexPortal" id="CPX-4764">
    <property type="entry name" value="TRAPP II complex"/>
</dbReference>
<dbReference type="ComplexPortal" id="CPX-4766">
    <property type="entry name" value="TRAPP III complex"/>
</dbReference>
<dbReference type="FunCoup" id="Q9CQP2">
    <property type="interactions" value="2901"/>
</dbReference>
<dbReference type="IntAct" id="Q9CQP2">
    <property type="interactions" value="10"/>
</dbReference>
<dbReference type="MINT" id="Q9CQP2"/>
<dbReference type="STRING" id="10090.ENSMUSP00000112195"/>
<dbReference type="iPTMnet" id="Q9CQP2"/>
<dbReference type="PhosphoSitePlus" id="Q9CQP2"/>
<dbReference type="PaxDb" id="10090-ENSMUSP00000112195"/>
<dbReference type="ProteomicsDB" id="259170"/>
<dbReference type="Pumba" id="Q9CQP2"/>
<dbReference type="Antibodypedia" id="52678">
    <property type="antibodies" value="3 antibodies from 1 providers"/>
</dbReference>
<dbReference type="DNASU" id="66050"/>
<dbReference type="DNASU" id="66226"/>
<dbReference type="Ensembl" id="ENSMUST00000112194.2">
    <property type="protein sequence ID" value="ENSMUSP00000107813.2"/>
    <property type="gene ID" value="ENSMUSG00000079317.11"/>
</dbReference>
<dbReference type="Ensembl" id="ENSMUST00000116495.8">
    <property type="protein sequence ID" value="ENSMUSP00000112195.2"/>
    <property type="gene ID" value="ENSMUSG00000079317.11"/>
</dbReference>
<dbReference type="GeneID" id="66226"/>
<dbReference type="KEGG" id="mmu:66050"/>
<dbReference type="KEGG" id="mmu:66226"/>
<dbReference type="UCSC" id="uc009uws.1">
    <property type="organism name" value="mouse"/>
</dbReference>
<dbReference type="AGR" id="MGI:1913476"/>
<dbReference type="CTD" id="10597"/>
<dbReference type="CTD" id="6399"/>
<dbReference type="MGI" id="MGI:1913476">
    <property type="gene designation" value="Trappc2"/>
</dbReference>
<dbReference type="VEuPathDB" id="HostDB:ENSMUSG00000079317"/>
<dbReference type="eggNOG" id="KOG3487">
    <property type="taxonomic scope" value="Eukaryota"/>
</dbReference>
<dbReference type="GeneTree" id="ENSGT01010000222530"/>
<dbReference type="HOGENOM" id="CLU_085828_0_2_1"/>
<dbReference type="InParanoid" id="Q9CQP2"/>
<dbReference type="OMA" id="RYMNQFI"/>
<dbReference type="OrthoDB" id="10252102at2759"/>
<dbReference type="PhylomeDB" id="Q9CQP2"/>
<dbReference type="TreeFam" id="TF314814"/>
<dbReference type="Reactome" id="R-MMU-204005">
    <property type="pathway name" value="COPII-mediated vesicle transport"/>
</dbReference>
<dbReference type="Reactome" id="R-MMU-8876198">
    <property type="pathway name" value="RAB GEFs exchange GTP for GDP on RABs"/>
</dbReference>
<dbReference type="BioGRID-ORCS" id="66050">
    <property type="hits" value="2 hits in 76 CRISPR screens"/>
</dbReference>
<dbReference type="BioGRID-ORCS" id="66226">
    <property type="hits" value="3 hits in 77 CRISPR screens"/>
</dbReference>
<dbReference type="ChiTaRS" id="Trappc2">
    <property type="organism name" value="mouse"/>
</dbReference>
<dbReference type="EvolutionaryTrace" id="Q9CQP2"/>
<dbReference type="PRO" id="PR:Q9CQP2"/>
<dbReference type="Proteomes" id="UP000000589">
    <property type="component" value="Chromosome X"/>
</dbReference>
<dbReference type="RNAct" id="Q9CQP2">
    <property type="molecule type" value="protein"/>
</dbReference>
<dbReference type="Bgee" id="ENSMUSG00000079317">
    <property type="expression patterns" value="Expressed in dentate gyrus of hippocampal formation granule cell and 71 other cell types or tissues"/>
</dbReference>
<dbReference type="ExpressionAtlas" id="Q9CQP2">
    <property type="expression patterns" value="baseline and differential"/>
</dbReference>
<dbReference type="GO" id="GO:0005737">
    <property type="term" value="C:cytoplasm"/>
    <property type="evidence" value="ECO:0000303"/>
    <property type="project" value="ComplexPortal"/>
</dbReference>
<dbReference type="GO" id="GO:0005793">
    <property type="term" value="C:endoplasmic reticulum-Golgi intermediate compartment"/>
    <property type="evidence" value="ECO:0007669"/>
    <property type="project" value="UniProtKB-SubCell"/>
</dbReference>
<dbReference type="GO" id="GO:0005634">
    <property type="term" value="C:nucleus"/>
    <property type="evidence" value="ECO:0000250"/>
    <property type="project" value="UniProtKB"/>
</dbReference>
<dbReference type="GO" id="GO:0048471">
    <property type="term" value="C:perinuclear region of cytoplasm"/>
    <property type="evidence" value="ECO:0007669"/>
    <property type="project" value="UniProtKB-SubCell"/>
</dbReference>
<dbReference type="GO" id="GO:0030008">
    <property type="term" value="C:TRAPP complex"/>
    <property type="evidence" value="ECO:0000314"/>
    <property type="project" value="MGI"/>
</dbReference>
<dbReference type="GO" id="GO:1990071">
    <property type="term" value="C:TRAPPII protein complex"/>
    <property type="evidence" value="ECO:0000303"/>
    <property type="project" value="ComplexPortal"/>
</dbReference>
<dbReference type="GO" id="GO:1990072">
    <property type="term" value="C:TRAPPIII protein complex"/>
    <property type="evidence" value="ECO:0000303"/>
    <property type="project" value="ComplexPortal"/>
</dbReference>
<dbReference type="GO" id="GO:0001222">
    <property type="term" value="F:transcription corepressor binding"/>
    <property type="evidence" value="ECO:0000250"/>
    <property type="project" value="UniProtKB"/>
</dbReference>
<dbReference type="GO" id="GO:0048208">
    <property type="term" value="P:COPII vesicle coating"/>
    <property type="evidence" value="ECO:0000303"/>
    <property type="project" value="ComplexPortal"/>
</dbReference>
<dbReference type="GO" id="GO:0006888">
    <property type="term" value="P:endoplasmic reticulum to Golgi vesicle-mediated transport"/>
    <property type="evidence" value="ECO:0000303"/>
    <property type="project" value="ComplexPortal"/>
</dbReference>
<dbReference type="GO" id="GO:0010628">
    <property type="term" value="P:positive regulation of gene expression"/>
    <property type="evidence" value="ECO:0000250"/>
    <property type="project" value="UniProtKB"/>
</dbReference>
<dbReference type="GO" id="GO:0006901">
    <property type="term" value="P:vesicle coating"/>
    <property type="evidence" value="ECO:0000303"/>
    <property type="project" value="ComplexPortal"/>
</dbReference>
<dbReference type="GO" id="GO:0099022">
    <property type="term" value="P:vesicle tethering"/>
    <property type="evidence" value="ECO:0000303"/>
    <property type="project" value="ComplexPortal"/>
</dbReference>
<dbReference type="CDD" id="cd14825">
    <property type="entry name" value="TRAPPC2_sedlin"/>
    <property type="match status" value="1"/>
</dbReference>
<dbReference type="FunFam" id="3.30.450.70:FF:000001">
    <property type="entry name" value="Trafficking protein particle complex subunit 2"/>
    <property type="match status" value="1"/>
</dbReference>
<dbReference type="Gene3D" id="3.30.450.70">
    <property type="match status" value="1"/>
</dbReference>
<dbReference type="InterPro" id="IPR011012">
    <property type="entry name" value="Longin-like_dom_sf"/>
</dbReference>
<dbReference type="InterPro" id="IPR006722">
    <property type="entry name" value="Sedlin"/>
</dbReference>
<dbReference type="PANTHER" id="PTHR12403">
    <property type="entry name" value="TRAFFICKING PROTEIN PARTICLE COMPLEX SUBUNIT 2"/>
    <property type="match status" value="1"/>
</dbReference>
<dbReference type="Pfam" id="PF04628">
    <property type="entry name" value="Sedlin_N"/>
    <property type="match status" value="1"/>
</dbReference>
<dbReference type="SUPFAM" id="SSF64356">
    <property type="entry name" value="SNARE-like"/>
    <property type="match status" value="1"/>
</dbReference>
<evidence type="ECO:0000250" key="1"/>
<evidence type="ECO:0000250" key="2">
    <source>
        <dbReference type="UniProtKB" id="P0DI81"/>
    </source>
</evidence>
<evidence type="ECO:0000269" key="3">
    <source>
    </source>
</evidence>
<evidence type="ECO:0000305" key="4"/>
<evidence type="ECO:0007829" key="5">
    <source>
        <dbReference type="PDB" id="2J3W"/>
    </source>
</evidence>
<sequence>MSGSFYFVIVGHHDNPVFEMEFLPPGKAESKDDHRHLNQFIAHAALDLVDENMWLSNNMYLKTVDKFNEWFVSAFVTAGHMRFIMLHDVRQEDGIKNFFTDVYDLYIKFAMNPFYEPNSPIRSSAFDRKVQFLGKKHLLS</sequence>
<organism>
    <name type="scientific">Mus musculus</name>
    <name type="common">Mouse</name>
    <dbReference type="NCBI Taxonomy" id="10090"/>
    <lineage>
        <taxon>Eukaryota</taxon>
        <taxon>Metazoa</taxon>
        <taxon>Chordata</taxon>
        <taxon>Craniata</taxon>
        <taxon>Vertebrata</taxon>
        <taxon>Euteleostomi</taxon>
        <taxon>Mammalia</taxon>
        <taxon>Eutheria</taxon>
        <taxon>Euarchontoglires</taxon>
        <taxon>Glires</taxon>
        <taxon>Rodentia</taxon>
        <taxon>Myomorpha</taxon>
        <taxon>Muroidea</taxon>
        <taxon>Muridae</taxon>
        <taxon>Murinae</taxon>
        <taxon>Mus</taxon>
        <taxon>Mus</taxon>
    </lineage>
</organism>